<accession>C0M815</accession>
<protein>
    <recommendedName>
        <fullName evidence="1">Transcriptional repressor NrdR</fullName>
    </recommendedName>
</protein>
<keyword id="KW-0067">ATP-binding</keyword>
<keyword id="KW-0238">DNA-binding</keyword>
<keyword id="KW-0479">Metal-binding</keyword>
<keyword id="KW-0547">Nucleotide-binding</keyword>
<keyword id="KW-0678">Repressor</keyword>
<keyword id="KW-0804">Transcription</keyword>
<keyword id="KW-0805">Transcription regulation</keyword>
<keyword id="KW-0862">Zinc</keyword>
<keyword id="KW-0863">Zinc-finger</keyword>
<comment type="function">
    <text evidence="1">Negatively regulates transcription of bacterial ribonucleotide reductase nrd genes and operons by binding to NrdR-boxes.</text>
</comment>
<comment type="cofactor">
    <cofactor evidence="1">
        <name>Zn(2+)</name>
        <dbReference type="ChEBI" id="CHEBI:29105"/>
    </cofactor>
    <text evidence="1">Binds 1 zinc ion.</text>
</comment>
<comment type="similarity">
    <text evidence="1">Belongs to the NrdR family.</text>
</comment>
<proteinExistence type="inferred from homology"/>
<sequence length="164" mass="19030">MRCPKCNYNKSSVVDSRQAEDGNTIRRRRECESCHTRFTTFERLEELPLLVIKKDGTREQFSRDKILNGVVQSAQKRPVSSTDIENLISRIEQKVRTAYENEVSSTVIGNLVMEELAELDEITYVRFASVYKSFKDLDEIEELLQQITNRVRGKKKSSVDDEAY</sequence>
<gene>
    <name evidence="1" type="primary">nrdR</name>
    <name type="ordered locus">SEQ_1888</name>
</gene>
<organism>
    <name type="scientific">Streptococcus equi subsp. equi (strain 4047)</name>
    <dbReference type="NCBI Taxonomy" id="553482"/>
    <lineage>
        <taxon>Bacteria</taxon>
        <taxon>Bacillati</taxon>
        <taxon>Bacillota</taxon>
        <taxon>Bacilli</taxon>
        <taxon>Lactobacillales</taxon>
        <taxon>Streptococcaceae</taxon>
        <taxon>Streptococcus</taxon>
    </lineage>
</organism>
<dbReference type="EMBL" id="FM204883">
    <property type="protein sequence ID" value="CAW95075.1"/>
    <property type="molecule type" value="Genomic_DNA"/>
</dbReference>
<dbReference type="RefSeq" id="WP_012516251.1">
    <property type="nucleotide sequence ID" value="NC_012471.1"/>
</dbReference>
<dbReference type="SMR" id="C0M815"/>
<dbReference type="GeneID" id="83705525"/>
<dbReference type="KEGG" id="seu:SEQ_1888"/>
<dbReference type="HOGENOM" id="CLU_108412_0_0_9"/>
<dbReference type="OrthoDB" id="9807461at2"/>
<dbReference type="Proteomes" id="UP000001365">
    <property type="component" value="Chromosome"/>
</dbReference>
<dbReference type="GO" id="GO:0005524">
    <property type="term" value="F:ATP binding"/>
    <property type="evidence" value="ECO:0007669"/>
    <property type="project" value="UniProtKB-KW"/>
</dbReference>
<dbReference type="GO" id="GO:0003677">
    <property type="term" value="F:DNA binding"/>
    <property type="evidence" value="ECO:0007669"/>
    <property type="project" value="UniProtKB-KW"/>
</dbReference>
<dbReference type="GO" id="GO:0008270">
    <property type="term" value="F:zinc ion binding"/>
    <property type="evidence" value="ECO:0007669"/>
    <property type="project" value="UniProtKB-UniRule"/>
</dbReference>
<dbReference type="GO" id="GO:0045892">
    <property type="term" value="P:negative regulation of DNA-templated transcription"/>
    <property type="evidence" value="ECO:0007669"/>
    <property type="project" value="UniProtKB-UniRule"/>
</dbReference>
<dbReference type="HAMAP" id="MF_00440">
    <property type="entry name" value="NrdR"/>
    <property type="match status" value="1"/>
</dbReference>
<dbReference type="InterPro" id="IPR005144">
    <property type="entry name" value="ATP-cone_dom"/>
</dbReference>
<dbReference type="InterPro" id="IPR055173">
    <property type="entry name" value="NrdR-like_N"/>
</dbReference>
<dbReference type="InterPro" id="IPR003796">
    <property type="entry name" value="RNR_NrdR-like"/>
</dbReference>
<dbReference type="NCBIfam" id="TIGR00244">
    <property type="entry name" value="transcriptional regulator NrdR"/>
    <property type="match status" value="1"/>
</dbReference>
<dbReference type="PANTHER" id="PTHR30455">
    <property type="entry name" value="TRANSCRIPTIONAL REPRESSOR NRDR"/>
    <property type="match status" value="1"/>
</dbReference>
<dbReference type="PANTHER" id="PTHR30455:SF2">
    <property type="entry name" value="TRANSCRIPTIONAL REPRESSOR NRDR"/>
    <property type="match status" value="1"/>
</dbReference>
<dbReference type="Pfam" id="PF03477">
    <property type="entry name" value="ATP-cone"/>
    <property type="match status" value="1"/>
</dbReference>
<dbReference type="Pfam" id="PF22811">
    <property type="entry name" value="Zn_ribbon_NrdR"/>
    <property type="match status" value="1"/>
</dbReference>
<dbReference type="PROSITE" id="PS51161">
    <property type="entry name" value="ATP_CONE"/>
    <property type="match status" value="1"/>
</dbReference>
<name>NRDR_STRE4</name>
<reference key="1">
    <citation type="journal article" date="2009" name="PLoS Pathog.">
        <title>Genomic evidence for the evolution of Streptococcus equi: host restriction, increased virulence, and genetic exchange with human pathogens.</title>
        <authorList>
            <person name="Holden M.T.G."/>
            <person name="Heather Z."/>
            <person name="Paillot R."/>
            <person name="Steward K.F."/>
            <person name="Webb K."/>
            <person name="Ainslie F."/>
            <person name="Jourdan T."/>
            <person name="Bason N.C."/>
            <person name="Holroyd N.E."/>
            <person name="Mungall K."/>
            <person name="Quail M.A."/>
            <person name="Sanders M."/>
            <person name="Simmonds M."/>
            <person name="Willey D."/>
            <person name="Brooks K."/>
            <person name="Aanensen D.M."/>
            <person name="Spratt B.G."/>
            <person name="Jolley K.A."/>
            <person name="Maiden M.C.J."/>
            <person name="Kehoe M."/>
            <person name="Chanter N."/>
            <person name="Bentley S.D."/>
            <person name="Robinson C."/>
            <person name="Maskell D.J."/>
            <person name="Parkhill J."/>
            <person name="Waller A.S."/>
        </authorList>
    </citation>
    <scope>NUCLEOTIDE SEQUENCE [LARGE SCALE GENOMIC DNA]</scope>
    <source>
        <strain>4047</strain>
    </source>
</reference>
<evidence type="ECO:0000255" key="1">
    <source>
        <dbReference type="HAMAP-Rule" id="MF_00440"/>
    </source>
</evidence>
<feature type="chain" id="PRO_1000191814" description="Transcriptional repressor NrdR">
    <location>
        <begin position="1"/>
        <end position="164"/>
    </location>
</feature>
<feature type="domain" description="ATP-cone" evidence="1">
    <location>
        <begin position="49"/>
        <end position="139"/>
    </location>
</feature>
<feature type="zinc finger region" evidence="1">
    <location>
        <begin position="3"/>
        <end position="34"/>
    </location>
</feature>